<name>Y021_PYRIL</name>
<evidence type="ECO:0000255" key="1">
    <source>
        <dbReference type="HAMAP-Rule" id="MF_01406"/>
    </source>
</evidence>
<feature type="chain" id="PRO_1000068437" description="UPF0282 protein Pisl_0021">
    <location>
        <begin position="1"/>
        <end position="305"/>
    </location>
</feature>
<sequence length="305" mass="34270">MDFSPVGEESLGVRSMCFYVETRDVRILFDAGVSLAPRRFGLPPHPRELERARAVRAEILRLAEAADVVTVSHYHRDHFTPWYPSVYMATDGEMYKRVYRGKKVLMKSPQDLNWSQRRRHYGLSKALQETGAEAVYADGGEWTFGETRVAASPPLWHGPAGSKTGRVVGFAVSDGEERLVFLPDVEGPLEPEPIAFAREARPTVVVVGGPPTYLGWDLEKAIKNLAELVELRPHTLVLAHHLLRDMQWREKVAPLFELAERRGVEVATYASLAGRPEELLEARRRELYAKEPAAAVETGEGEEED</sequence>
<organism>
    <name type="scientific">Pyrobaculum islandicum (strain DSM 4184 / JCM 9189 / GEO3)</name>
    <dbReference type="NCBI Taxonomy" id="384616"/>
    <lineage>
        <taxon>Archaea</taxon>
        <taxon>Thermoproteota</taxon>
        <taxon>Thermoprotei</taxon>
        <taxon>Thermoproteales</taxon>
        <taxon>Thermoproteaceae</taxon>
        <taxon>Pyrobaculum</taxon>
    </lineage>
</organism>
<protein>
    <recommendedName>
        <fullName evidence="1">UPF0282 protein Pisl_0021</fullName>
    </recommendedName>
</protein>
<reference key="1">
    <citation type="submission" date="2006-12" db="EMBL/GenBank/DDBJ databases">
        <title>Complete sequence of Pyrobaculum islandicum DSM 4184.</title>
        <authorList>
            <person name="Copeland A."/>
            <person name="Lucas S."/>
            <person name="Lapidus A."/>
            <person name="Barry K."/>
            <person name="Detter J.C."/>
            <person name="Glavina del Rio T."/>
            <person name="Dalin E."/>
            <person name="Tice H."/>
            <person name="Pitluck S."/>
            <person name="Meincke L."/>
            <person name="Brettin T."/>
            <person name="Bruce D."/>
            <person name="Han C."/>
            <person name="Tapia R."/>
            <person name="Gilna P."/>
            <person name="Schmutz J."/>
            <person name="Larimer F."/>
            <person name="Land M."/>
            <person name="Hauser L."/>
            <person name="Kyrpides N."/>
            <person name="Mikhailova N."/>
            <person name="Cozen A.E."/>
            <person name="Fitz-Gibbon S.T."/>
            <person name="House C.H."/>
            <person name="Saltikov C."/>
            <person name="Lowe T."/>
            <person name="Richardson P."/>
        </authorList>
    </citation>
    <scope>NUCLEOTIDE SEQUENCE [LARGE SCALE GENOMIC DNA]</scope>
    <source>
        <strain>DSM 4184 / JCM 9189 / GEO3</strain>
    </source>
</reference>
<dbReference type="EMBL" id="CP000504">
    <property type="protein sequence ID" value="ABL87205.1"/>
    <property type="molecule type" value="Genomic_DNA"/>
</dbReference>
<dbReference type="RefSeq" id="WP_011761782.1">
    <property type="nucleotide sequence ID" value="NC_008701.1"/>
</dbReference>
<dbReference type="STRING" id="384616.Pisl_0021"/>
<dbReference type="GeneID" id="4618109"/>
<dbReference type="KEGG" id="pis:Pisl_0021"/>
<dbReference type="eggNOG" id="arCOG00969">
    <property type="taxonomic scope" value="Archaea"/>
</dbReference>
<dbReference type="HOGENOM" id="CLU_079268_0_0_2"/>
<dbReference type="OrthoDB" id="21331at2157"/>
<dbReference type="Proteomes" id="UP000002595">
    <property type="component" value="Chromosome"/>
</dbReference>
<dbReference type="Gene3D" id="3.60.15.10">
    <property type="entry name" value="Ribonuclease Z/Hydroxyacylglutathione hydrolase-like"/>
    <property type="match status" value="1"/>
</dbReference>
<dbReference type="HAMAP" id="MF_01406">
    <property type="entry name" value="UPF0282"/>
    <property type="match status" value="1"/>
</dbReference>
<dbReference type="InterPro" id="IPR036866">
    <property type="entry name" value="RibonucZ/Hydroxyglut_hydro"/>
</dbReference>
<dbReference type="InterPro" id="IPR050114">
    <property type="entry name" value="UPF0173_UPF0282_UlaG_hydrolase"/>
</dbReference>
<dbReference type="InterPro" id="IPR014426">
    <property type="entry name" value="UPF0282_hydrls"/>
</dbReference>
<dbReference type="PANTHER" id="PTHR43546">
    <property type="entry name" value="UPF0173 METAL-DEPENDENT HYDROLASE MJ1163-RELATED"/>
    <property type="match status" value="1"/>
</dbReference>
<dbReference type="PANTHER" id="PTHR43546:SF4">
    <property type="entry name" value="UPF0282 PROTEIN MJ1629"/>
    <property type="match status" value="1"/>
</dbReference>
<dbReference type="Pfam" id="PF13483">
    <property type="entry name" value="Lactamase_B_3"/>
    <property type="match status" value="1"/>
</dbReference>
<dbReference type="PIRSF" id="PIRSF004944">
    <property type="entry name" value="UCP004944_hydrls"/>
    <property type="match status" value="1"/>
</dbReference>
<dbReference type="SUPFAM" id="SSF56281">
    <property type="entry name" value="Metallo-hydrolase/oxidoreductase"/>
    <property type="match status" value="1"/>
</dbReference>
<gene>
    <name type="ordered locus">Pisl_0021</name>
</gene>
<accession>A1RQH3</accession>
<comment type="similarity">
    <text evidence="1">Belongs to the UPF0282 family.</text>
</comment>
<proteinExistence type="inferred from homology"/>